<accession>Q4G3C2</accession>
<organism>
    <name type="scientific">Emiliania huxleyi</name>
    <name type="common">Coccolithophore</name>
    <name type="synonym">Pontosphaera huxleyi</name>
    <dbReference type="NCBI Taxonomy" id="2903"/>
    <lineage>
        <taxon>Eukaryota</taxon>
        <taxon>Haptista</taxon>
        <taxon>Haptophyta</taxon>
        <taxon>Prymnesiophyceae</taxon>
        <taxon>Isochrysidales</taxon>
        <taxon>Noelaerhabdaceae</taxon>
        <taxon>Emiliania</taxon>
    </lineage>
</organism>
<gene>
    <name evidence="1" type="primary">psbH</name>
</gene>
<proteinExistence type="inferred from homology"/>
<reference key="1">
    <citation type="journal article" date="2005" name="DNA Res.">
        <title>The complete plastid genome sequence of the haptophyte Emiliania huxleyi: a comparison to other plastid genomes.</title>
        <authorList>
            <person name="Sanchez-Puerta M.V."/>
            <person name="Bachvaroff T.R."/>
            <person name="Delwiche C.F."/>
        </authorList>
    </citation>
    <scope>NUCLEOTIDE SEQUENCE [LARGE SCALE GENOMIC DNA]</scope>
    <source>
        <strain>CCMP373 / CSIRO-CS-57 / BT6</strain>
    </source>
</reference>
<geneLocation type="chloroplast"/>
<name>PSBH_EMIHU</name>
<feature type="chain" id="PRO_0000275783" description="Photosystem II reaction center protein H">
    <location>
        <begin position="1"/>
        <end position="66"/>
    </location>
</feature>
<feature type="transmembrane region" description="Helical" evidence="1">
    <location>
        <begin position="29"/>
        <end position="49"/>
    </location>
</feature>
<sequence>MALRTRLGEILRPLNAEYGKVAPGWGTTPVMGVFMGLFLVFLVIILQIYNSSIILENVDVDWVTVN</sequence>
<comment type="function">
    <text evidence="1">One of the components of the core complex of photosystem II (PSII), required for its stability and/or assembly. PSII is a light-driven water:plastoquinone oxidoreductase that uses light energy to abstract electrons from H(2)O, generating O(2) and a proton gradient subsequently used for ATP formation. It consists of a core antenna complex that captures photons, and an electron transfer chain that converts photonic excitation into a charge separation.</text>
</comment>
<comment type="subunit">
    <text evidence="1">PSII is composed of 1 copy each of membrane proteins PsbA, PsbB, PsbC, PsbD, PsbE, PsbF, PsbH, PsbI, PsbJ, PsbK, PsbL, PsbM, PsbT, PsbX, PsbY, PsbZ, Psb30/Ycf12, at least 3 peripheral proteins of the oxygen-evolving complex and a large number of cofactors. It forms dimeric complexes.</text>
</comment>
<comment type="subcellular location">
    <subcellularLocation>
        <location evidence="1">Plastid</location>
        <location evidence="1">Chloroplast thylakoid membrane</location>
        <topology evidence="1">Single-pass membrane protein</topology>
    </subcellularLocation>
</comment>
<comment type="similarity">
    <text evidence="1">Belongs to the PsbH family.</text>
</comment>
<dbReference type="EMBL" id="AY741371">
    <property type="protein sequence ID" value="AAX13844.1"/>
    <property type="molecule type" value="Genomic_DNA"/>
</dbReference>
<dbReference type="RefSeq" id="YP_277345.1">
    <property type="nucleotide sequence ID" value="NC_007288.1"/>
</dbReference>
<dbReference type="SMR" id="Q4G3C2"/>
<dbReference type="STRING" id="2903.Q4G3C2"/>
<dbReference type="GeneID" id="3562413"/>
<dbReference type="GO" id="GO:0009535">
    <property type="term" value="C:chloroplast thylakoid membrane"/>
    <property type="evidence" value="ECO:0007669"/>
    <property type="project" value="UniProtKB-SubCell"/>
</dbReference>
<dbReference type="GO" id="GO:0009523">
    <property type="term" value="C:photosystem II"/>
    <property type="evidence" value="ECO:0007669"/>
    <property type="project" value="UniProtKB-KW"/>
</dbReference>
<dbReference type="GO" id="GO:0042301">
    <property type="term" value="F:phosphate ion binding"/>
    <property type="evidence" value="ECO:0007669"/>
    <property type="project" value="InterPro"/>
</dbReference>
<dbReference type="GO" id="GO:0015979">
    <property type="term" value="P:photosynthesis"/>
    <property type="evidence" value="ECO:0007669"/>
    <property type="project" value="UniProtKB-UniRule"/>
</dbReference>
<dbReference type="GO" id="GO:0050821">
    <property type="term" value="P:protein stabilization"/>
    <property type="evidence" value="ECO:0007669"/>
    <property type="project" value="InterPro"/>
</dbReference>
<dbReference type="Gene3D" id="1.20.5.880">
    <property type="entry name" value="Photosystem II reaction center protein H"/>
    <property type="match status" value="1"/>
</dbReference>
<dbReference type="HAMAP" id="MF_00752">
    <property type="entry name" value="PSII_PsbH"/>
    <property type="match status" value="1"/>
</dbReference>
<dbReference type="InterPro" id="IPR001056">
    <property type="entry name" value="PSII_PsbH"/>
</dbReference>
<dbReference type="InterPro" id="IPR036863">
    <property type="entry name" value="PSII_PsbH_sf"/>
</dbReference>
<dbReference type="NCBIfam" id="NF002728">
    <property type="entry name" value="PRK02624.1"/>
    <property type="match status" value="1"/>
</dbReference>
<dbReference type="PANTHER" id="PTHR34469">
    <property type="entry name" value="PHOTOSYSTEM II REACTION CENTER PROTEIN H"/>
    <property type="match status" value="1"/>
</dbReference>
<dbReference type="PANTHER" id="PTHR34469:SF4">
    <property type="entry name" value="PHOTOSYSTEM II REACTION CENTER PROTEIN H"/>
    <property type="match status" value="1"/>
</dbReference>
<dbReference type="Pfam" id="PF00737">
    <property type="entry name" value="PsbH"/>
    <property type="match status" value="1"/>
</dbReference>
<dbReference type="SUPFAM" id="SSF161025">
    <property type="entry name" value="Photosystem II 10 kDa phosphoprotein PsbH"/>
    <property type="match status" value="1"/>
</dbReference>
<evidence type="ECO:0000255" key="1">
    <source>
        <dbReference type="HAMAP-Rule" id="MF_00752"/>
    </source>
</evidence>
<keyword id="KW-0150">Chloroplast</keyword>
<keyword id="KW-0472">Membrane</keyword>
<keyword id="KW-0602">Photosynthesis</keyword>
<keyword id="KW-0604">Photosystem II</keyword>
<keyword id="KW-0934">Plastid</keyword>
<keyword id="KW-0793">Thylakoid</keyword>
<keyword id="KW-0812">Transmembrane</keyword>
<keyword id="KW-1133">Transmembrane helix</keyword>
<protein>
    <recommendedName>
        <fullName evidence="1">Photosystem II reaction center protein H</fullName>
        <shortName evidence="1">PSII-H</shortName>
    </recommendedName>
</protein>